<gene>
    <name evidence="1" type="primary">rhmD</name>
    <name type="ordered locus">E2348C_2391</name>
</gene>
<proteinExistence type="inferred from homology"/>
<sequence length="405" mass="44750">MENIMTLPKIKQVRAWFTGGATAEKGAGGGDYHDQGANHWIDDHIATPMSKYREYEQSRQSFGINVLGTLIVEVEAENGQTGFAVSTAGEMGCFIVEKHLNRFIEGKCVSDIKLIHDQMLNATLYYSGSGGLVMNTISCVDLALWDLFGKVVGLPVYKLLGGAVRDEIQFYATDARPDLAKEMGFIGGKMPTHWGPHDGDAGIHKDAAMVADMREKCGEDFWLMLDCWMSQDVNYATKLAHACAPYNLKWIEECLPPQQYEGYRELKRNAPAGMMVTSGEHHGTLQSFRTLSETGIDIMQPDVGWCGGLTTLVEIAAIAKSRGQLVVPHGSSVYSHHAVITFTNTPFSEFLMTSPDCSTMRPQFDPILLNEPVPVNGRIHKSVLDKPGFGVELNRDCNLKRPYSH</sequence>
<name>RHMD_ECO27</name>
<dbReference type="EC" id="4.2.1.90" evidence="1"/>
<dbReference type="EMBL" id="FM180568">
    <property type="protein sequence ID" value="CAS09939.1"/>
    <property type="molecule type" value="Genomic_DNA"/>
</dbReference>
<dbReference type="SMR" id="B7UFQ9"/>
<dbReference type="KEGG" id="ecg:E2348C_2391"/>
<dbReference type="HOGENOM" id="CLU_030273_1_0_6"/>
<dbReference type="Proteomes" id="UP000008205">
    <property type="component" value="Chromosome"/>
</dbReference>
<dbReference type="GO" id="GO:0050032">
    <property type="term" value="F:L-rhamnonate dehydratase activity"/>
    <property type="evidence" value="ECO:0007669"/>
    <property type="project" value="UniProtKB-UniRule"/>
</dbReference>
<dbReference type="GO" id="GO:0000287">
    <property type="term" value="F:magnesium ion binding"/>
    <property type="evidence" value="ECO:0007669"/>
    <property type="project" value="UniProtKB-UniRule"/>
</dbReference>
<dbReference type="GO" id="GO:0009063">
    <property type="term" value="P:amino acid catabolic process"/>
    <property type="evidence" value="ECO:0007669"/>
    <property type="project" value="InterPro"/>
</dbReference>
<dbReference type="GO" id="GO:0016052">
    <property type="term" value="P:carbohydrate catabolic process"/>
    <property type="evidence" value="ECO:0007669"/>
    <property type="project" value="TreeGrafter"/>
</dbReference>
<dbReference type="CDD" id="cd03327">
    <property type="entry name" value="MR_like_2"/>
    <property type="match status" value="1"/>
</dbReference>
<dbReference type="FunFam" id="3.30.390.10:FF:000007">
    <property type="entry name" value="L-rhamnonate dehydratase"/>
    <property type="match status" value="1"/>
</dbReference>
<dbReference type="FunFam" id="3.20.20.120:FF:000005">
    <property type="entry name" value="Putative L-rhamnonate dehydratase"/>
    <property type="match status" value="1"/>
</dbReference>
<dbReference type="Gene3D" id="3.20.20.120">
    <property type="entry name" value="Enolase-like C-terminal domain"/>
    <property type="match status" value="1"/>
</dbReference>
<dbReference type="Gene3D" id="3.30.390.10">
    <property type="entry name" value="Enolase-like, N-terminal domain"/>
    <property type="match status" value="1"/>
</dbReference>
<dbReference type="HAMAP" id="MF_01288">
    <property type="entry name" value="Rhamnon_dehydrat"/>
    <property type="match status" value="1"/>
</dbReference>
<dbReference type="InterPro" id="IPR036849">
    <property type="entry name" value="Enolase-like_C_sf"/>
</dbReference>
<dbReference type="InterPro" id="IPR029017">
    <property type="entry name" value="Enolase-like_N"/>
</dbReference>
<dbReference type="InterPro" id="IPR029065">
    <property type="entry name" value="Enolase_C-like"/>
</dbReference>
<dbReference type="InterPro" id="IPR023444">
    <property type="entry name" value="L-Rhamnon_dehydrat"/>
</dbReference>
<dbReference type="InterPro" id="IPR018110">
    <property type="entry name" value="Mandel_Rmase/mucon_lact_enz_CS"/>
</dbReference>
<dbReference type="InterPro" id="IPR013342">
    <property type="entry name" value="Mandelate_racemase_C"/>
</dbReference>
<dbReference type="InterPro" id="IPR013341">
    <property type="entry name" value="Mandelate_racemase_N_dom"/>
</dbReference>
<dbReference type="InterPro" id="IPR046945">
    <property type="entry name" value="RHMD-like"/>
</dbReference>
<dbReference type="NCBIfam" id="NF011968">
    <property type="entry name" value="PRK15440.1"/>
    <property type="match status" value="1"/>
</dbReference>
<dbReference type="PANTHER" id="PTHR13794">
    <property type="entry name" value="ENOLASE SUPERFAMILY, MANDELATE RACEMASE"/>
    <property type="match status" value="1"/>
</dbReference>
<dbReference type="PANTHER" id="PTHR13794:SF58">
    <property type="entry name" value="MITOCHONDRIAL ENOLASE SUPERFAMILY MEMBER 1"/>
    <property type="match status" value="1"/>
</dbReference>
<dbReference type="Pfam" id="PF13378">
    <property type="entry name" value="MR_MLE_C"/>
    <property type="match status" value="1"/>
</dbReference>
<dbReference type="Pfam" id="PF02746">
    <property type="entry name" value="MR_MLE_N"/>
    <property type="match status" value="1"/>
</dbReference>
<dbReference type="SFLD" id="SFLDS00001">
    <property type="entry name" value="Enolase"/>
    <property type="match status" value="1"/>
</dbReference>
<dbReference type="SFLD" id="SFLDF00006">
    <property type="entry name" value="rhamnonate_dehydratase"/>
    <property type="match status" value="1"/>
</dbReference>
<dbReference type="SMART" id="SM00922">
    <property type="entry name" value="MR_MLE"/>
    <property type="match status" value="1"/>
</dbReference>
<dbReference type="SUPFAM" id="SSF51604">
    <property type="entry name" value="Enolase C-terminal domain-like"/>
    <property type="match status" value="1"/>
</dbReference>
<dbReference type="SUPFAM" id="SSF54826">
    <property type="entry name" value="Enolase N-terminal domain-like"/>
    <property type="match status" value="1"/>
</dbReference>
<dbReference type="PROSITE" id="PS00908">
    <property type="entry name" value="MR_MLE_1"/>
    <property type="match status" value="1"/>
</dbReference>
<feature type="chain" id="PRO_1000165261" description="L-rhamnonate dehydratase">
    <location>
        <begin position="1"/>
        <end position="405"/>
    </location>
</feature>
<feature type="active site" description="Proton acceptor" evidence="1">
    <location>
        <position position="329"/>
    </location>
</feature>
<feature type="binding site" evidence="1">
    <location>
        <position position="33"/>
    </location>
    <ligand>
        <name>substrate</name>
    </ligand>
</feature>
<feature type="binding site" evidence="1">
    <location>
        <position position="59"/>
    </location>
    <ligand>
        <name>substrate</name>
    </ligand>
</feature>
<feature type="binding site" evidence="1">
    <location>
        <position position="226"/>
    </location>
    <ligand>
        <name>Mg(2+)</name>
        <dbReference type="ChEBI" id="CHEBI:18420"/>
    </ligand>
</feature>
<feature type="binding site" evidence="1">
    <location>
        <position position="252"/>
    </location>
    <ligand>
        <name>Mg(2+)</name>
        <dbReference type="ChEBI" id="CHEBI:18420"/>
    </ligand>
</feature>
<feature type="binding site" evidence="1">
    <location>
        <position position="280"/>
    </location>
    <ligand>
        <name>Mg(2+)</name>
        <dbReference type="ChEBI" id="CHEBI:18420"/>
    </ligand>
</feature>
<feature type="binding site" evidence="1">
    <location>
        <position position="349"/>
    </location>
    <ligand>
        <name>substrate</name>
    </ligand>
</feature>
<feature type="site" description="Increases basicity of active site His" evidence="1">
    <location>
        <position position="302"/>
    </location>
</feature>
<feature type="site" description="Transition state stabilizer" evidence="1">
    <location>
        <position position="349"/>
    </location>
</feature>
<evidence type="ECO:0000255" key="1">
    <source>
        <dbReference type="HAMAP-Rule" id="MF_01288"/>
    </source>
</evidence>
<keyword id="KW-0456">Lyase</keyword>
<keyword id="KW-0460">Magnesium</keyword>
<keyword id="KW-0479">Metal-binding</keyword>
<keyword id="KW-1185">Reference proteome</keyword>
<accession>B7UFQ9</accession>
<reference key="1">
    <citation type="journal article" date="2009" name="J. Bacteriol.">
        <title>Complete genome sequence and comparative genome analysis of enteropathogenic Escherichia coli O127:H6 strain E2348/69.</title>
        <authorList>
            <person name="Iguchi A."/>
            <person name="Thomson N.R."/>
            <person name="Ogura Y."/>
            <person name="Saunders D."/>
            <person name="Ooka T."/>
            <person name="Henderson I.R."/>
            <person name="Harris D."/>
            <person name="Asadulghani M."/>
            <person name="Kurokawa K."/>
            <person name="Dean P."/>
            <person name="Kenny B."/>
            <person name="Quail M.A."/>
            <person name="Thurston S."/>
            <person name="Dougan G."/>
            <person name="Hayashi T."/>
            <person name="Parkhill J."/>
            <person name="Frankel G."/>
        </authorList>
    </citation>
    <scope>NUCLEOTIDE SEQUENCE [LARGE SCALE GENOMIC DNA]</scope>
    <source>
        <strain>E2348/69 / EPEC</strain>
    </source>
</reference>
<comment type="function">
    <text evidence="1">Catalyzes the dehydration of L-rhamnonate to 2-keto-3-deoxy-L-rhamnonate (KDR).</text>
</comment>
<comment type="catalytic activity">
    <reaction evidence="1">
        <text>L-rhamnonate = 2-dehydro-3-deoxy-L-rhamnonate + H2O</text>
        <dbReference type="Rhea" id="RHEA:23080"/>
        <dbReference type="ChEBI" id="CHEBI:15377"/>
        <dbReference type="ChEBI" id="CHEBI:58118"/>
        <dbReference type="ChEBI" id="CHEBI:58371"/>
        <dbReference type="EC" id="4.2.1.90"/>
    </reaction>
</comment>
<comment type="cofactor">
    <cofactor evidence="1">
        <name>Mg(2+)</name>
        <dbReference type="ChEBI" id="CHEBI:18420"/>
    </cofactor>
    <text evidence="1">Binds 1 Mg(2+) ion per subunit.</text>
</comment>
<comment type="subunit">
    <text evidence="1">Homooctamer; tetramer of dimers.</text>
</comment>
<comment type="miscellaneous">
    <text evidence="1">Reaction proceeds via a syn dehydration.</text>
</comment>
<comment type="similarity">
    <text evidence="1">Belongs to the mandelate racemase/muconate lactonizing enzyme family. RhamD subfamily.</text>
</comment>
<protein>
    <recommendedName>
        <fullName evidence="1">L-rhamnonate dehydratase</fullName>
        <shortName evidence="1">RhamD</shortName>
        <ecNumber evidence="1">4.2.1.90</ecNumber>
    </recommendedName>
</protein>
<organism>
    <name type="scientific">Escherichia coli O127:H6 (strain E2348/69 / EPEC)</name>
    <dbReference type="NCBI Taxonomy" id="574521"/>
    <lineage>
        <taxon>Bacteria</taxon>
        <taxon>Pseudomonadati</taxon>
        <taxon>Pseudomonadota</taxon>
        <taxon>Gammaproteobacteria</taxon>
        <taxon>Enterobacterales</taxon>
        <taxon>Enterobacteriaceae</taxon>
        <taxon>Escherichia</taxon>
    </lineage>
</organism>